<keyword id="KW-0249">Electron transport</keyword>
<keyword id="KW-0349">Heme</keyword>
<keyword id="KW-0408">Iron</keyword>
<keyword id="KW-0472">Membrane</keyword>
<keyword id="KW-0479">Metal-binding</keyword>
<keyword id="KW-0496">Mitochondrion</keyword>
<keyword id="KW-0999">Mitochondrion inner membrane</keyword>
<keyword id="KW-0679">Respiratory chain</keyword>
<keyword id="KW-0812">Transmembrane</keyword>
<keyword id="KW-1133">Transmembrane helix</keyword>
<keyword id="KW-0813">Transport</keyword>
<keyword id="KW-0830">Ubiquinone</keyword>
<name>CYB_PHYME</name>
<proteinExistence type="inferred from homology"/>
<comment type="function">
    <text evidence="3">Component of the ubiquinol-cytochrome c reductase complex (complex III or cytochrome b-c1 complex) that is part of the mitochondrial respiratory chain. The b-c1 complex mediates electron transfer from ubiquinol to cytochrome c. Contributes to the generation of a proton gradient across the mitochondrial membrane that is then used for ATP synthesis.</text>
</comment>
<comment type="cofactor">
    <cofactor evidence="3">
        <name>heme b</name>
        <dbReference type="ChEBI" id="CHEBI:60344"/>
    </cofactor>
    <text evidence="3">Binds 2 heme b groups non-covalently.</text>
</comment>
<comment type="subunit">
    <text evidence="3">Fungal cytochrome b-c1 complex contains 10 subunits; 3 respiratory subunits, 2 core proteins and 5 low-molecular weight proteins. Cytochrome b-c1 complex is a homodimer.</text>
</comment>
<comment type="subcellular location">
    <subcellularLocation>
        <location evidence="3">Mitochondrion inner membrane</location>
        <topology evidence="3">Multi-pass membrane protein</topology>
    </subcellularLocation>
</comment>
<comment type="miscellaneous">
    <text evidence="1">Heme 1 (or BL or b562) is low-potential and absorbs at about 562 nm, and heme 2 (or BH or b566) is high-potential and absorbs at about 566 nm.</text>
</comment>
<comment type="similarity">
    <text evidence="4 5">Belongs to the cytochrome b family.</text>
</comment>
<comment type="caution">
    <text evidence="3">The protein contains only eight transmembrane helices, not nine as predicted by bioinformatics tools.</text>
</comment>
<geneLocation type="mitochondrion"/>
<reference key="1">
    <citation type="submission" date="1993-10" db="EMBL/GenBank/DDBJ databases">
        <title>Oomycete mtDNA: nucleotide sequence of the cob region from Phytophthora megasperma.</title>
        <authorList>
            <person name="Clary S.A."/>
            <person name="Hudspeth M.E.S."/>
        </authorList>
    </citation>
    <scope>NUCLEOTIDE SEQUENCE [GENOMIC DNA]</scope>
    <source>
        <strain>695T</strain>
    </source>
</reference>
<protein>
    <recommendedName>
        <fullName>Cytochrome b</fullName>
    </recommendedName>
    <alternativeName>
        <fullName>Complex III subunit 3</fullName>
    </alternativeName>
    <alternativeName>
        <fullName>Complex III subunit III</fullName>
    </alternativeName>
    <alternativeName>
        <fullName>Cytochrome b-c1 complex subunit 3</fullName>
    </alternativeName>
    <alternativeName>
        <fullName>Ubiquinol-cytochrome-c reductase complex cytochrome b subunit</fullName>
    </alternativeName>
</protein>
<dbReference type="EMBL" id="L16863">
    <property type="protein sequence ID" value="AAA32026.2"/>
    <property type="molecule type" value="Genomic_DNA"/>
</dbReference>
<dbReference type="SMR" id="Q35522"/>
<dbReference type="GO" id="GO:0005743">
    <property type="term" value="C:mitochondrial inner membrane"/>
    <property type="evidence" value="ECO:0007669"/>
    <property type="project" value="UniProtKB-SubCell"/>
</dbReference>
<dbReference type="GO" id="GO:0045275">
    <property type="term" value="C:respiratory chain complex III"/>
    <property type="evidence" value="ECO:0007669"/>
    <property type="project" value="InterPro"/>
</dbReference>
<dbReference type="GO" id="GO:0046872">
    <property type="term" value="F:metal ion binding"/>
    <property type="evidence" value="ECO:0007669"/>
    <property type="project" value="UniProtKB-KW"/>
</dbReference>
<dbReference type="GO" id="GO:0008121">
    <property type="term" value="F:ubiquinol-cytochrome-c reductase activity"/>
    <property type="evidence" value="ECO:0007669"/>
    <property type="project" value="InterPro"/>
</dbReference>
<dbReference type="GO" id="GO:0006122">
    <property type="term" value="P:mitochondrial electron transport, ubiquinol to cytochrome c"/>
    <property type="evidence" value="ECO:0007669"/>
    <property type="project" value="TreeGrafter"/>
</dbReference>
<dbReference type="CDD" id="cd00290">
    <property type="entry name" value="cytochrome_b_C"/>
    <property type="match status" value="1"/>
</dbReference>
<dbReference type="CDD" id="cd00284">
    <property type="entry name" value="Cytochrome_b_N"/>
    <property type="match status" value="1"/>
</dbReference>
<dbReference type="FunFam" id="1.20.810.10:FF:000004">
    <property type="entry name" value="Cytochrome b"/>
    <property type="match status" value="1"/>
</dbReference>
<dbReference type="Gene3D" id="1.20.810.10">
    <property type="entry name" value="Cytochrome Bc1 Complex, Chain C"/>
    <property type="match status" value="1"/>
</dbReference>
<dbReference type="InterPro" id="IPR005798">
    <property type="entry name" value="Cyt_b/b6_C"/>
</dbReference>
<dbReference type="InterPro" id="IPR036150">
    <property type="entry name" value="Cyt_b/b6_C_sf"/>
</dbReference>
<dbReference type="InterPro" id="IPR005797">
    <property type="entry name" value="Cyt_b/b6_N"/>
</dbReference>
<dbReference type="InterPro" id="IPR027387">
    <property type="entry name" value="Cytb/b6-like_sf"/>
</dbReference>
<dbReference type="InterPro" id="IPR030689">
    <property type="entry name" value="Cytochrome_b"/>
</dbReference>
<dbReference type="InterPro" id="IPR048260">
    <property type="entry name" value="Cytochrome_b_C_euk/bac"/>
</dbReference>
<dbReference type="InterPro" id="IPR048259">
    <property type="entry name" value="Cytochrome_b_N_euk/bac"/>
</dbReference>
<dbReference type="InterPro" id="IPR016174">
    <property type="entry name" value="Di-haem_cyt_TM"/>
</dbReference>
<dbReference type="PANTHER" id="PTHR19271">
    <property type="entry name" value="CYTOCHROME B"/>
    <property type="match status" value="1"/>
</dbReference>
<dbReference type="PANTHER" id="PTHR19271:SF16">
    <property type="entry name" value="CYTOCHROME B"/>
    <property type="match status" value="1"/>
</dbReference>
<dbReference type="Pfam" id="PF00032">
    <property type="entry name" value="Cytochrom_B_C"/>
    <property type="match status" value="1"/>
</dbReference>
<dbReference type="Pfam" id="PF00033">
    <property type="entry name" value="Cytochrome_B"/>
    <property type="match status" value="1"/>
</dbReference>
<dbReference type="PIRSF" id="PIRSF038885">
    <property type="entry name" value="COB"/>
    <property type="match status" value="1"/>
</dbReference>
<dbReference type="SUPFAM" id="SSF81648">
    <property type="entry name" value="a domain/subunit of cytochrome bc1 complex (Ubiquinol-cytochrome c reductase)"/>
    <property type="match status" value="1"/>
</dbReference>
<dbReference type="SUPFAM" id="SSF81342">
    <property type="entry name" value="Transmembrane di-heme cytochromes"/>
    <property type="match status" value="1"/>
</dbReference>
<dbReference type="PROSITE" id="PS51003">
    <property type="entry name" value="CYTB_CTER"/>
    <property type="match status" value="1"/>
</dbReference>
<dbReference type="PROSITE" id="PS51002">
    <property type="entry name" value="CYTB_NTER"/>
    <property type="match status" value="1"/>
</dbReference>
<organism>
    <name type="scientific">Phytophthora megasperma</name>
    <name type="common">Potato pink rot fungus</name>
    <dbReference type="NCBI Taxonomy" id="4788"/>
    <lineage>
        <taxon>Eukaryota</taxon>
        <taxon>Sar</taxon>
        <taxon>Stramenopiles</taxon>
        <taxon>Oomycota</taxon>
        <taxon>Peronosporales</taxon>
        <taxon>Peronosporaceae</taxon>
        <taxon>Phytophthora</taxon>
    </lineage>
</organism>
<evidence type="ECO:0000250" key="1"/>
<evidence type="ECO:0000250" key="2">
    <source>
        <dbReference type="UniProtKB" id="P00157"/>
    </source>
</evidence>
<evidence type="ECO:0000250" key="3">
    <source>
        <dbReference type="UniProtKB" id="P00163"/>
    </source>
</evidence>
<evidence type="ECO:0000255" key="4">
    <source>
        <dbReference type="PROSITE-ProRule" id="PRU00967"/>
    </source>
</evidence>
<evidence type="ECO:0000255" key="5">
    <source>
        <dbReference type="PROSITE-ProRule" id="PRU00968"/>
    </source>
</evidence>
<feature type="chain" id="PRO_0000061751" description="Cytochrome b">
    <location>
        <begin position="1"/>
        <end position="383"/>
    </location>
</feature>
<feature type="transmembrane region" description="Helical" evidence="3">
    <location>
        <begin position="31"/>
        <end position="51"/>
    </location>
</feature>
<feature type="transmembrane region" description="Helical" evidence="3">
    <location>
        <begin position="75"/>
        <end position="97"/>
    </location>
</feature>
<feature type="transmembrane region" description="Helical" evidence="3">
    <location>
        <begin position="112"/>
        <end position="132"/>
    </location>
</feature>
<feature type="transmembrane region" description="Helical" evidence="3">
    <location>
        <begin position="178"/>
        <end position="198"/>
    </location>
</feature>
<feature type="transmembrane region" description="Helical" evidence="3">
    <location>
        <begin position="224"/>
        <end position="244"/>
    </location>
</feature>
<feature type="transmembrane region" description="Helical" evidence="3">
    <location>
        <begin position="288"/>
        <end position="308"/>
    </location>
</feature>
<feature type="transmembrane region" description="Helical" evidence="3">
    <location>
        <begin position="320"/>
        <end position="340"/>
    </location>
</feature>
<feature type="transmembrane region" description="Helical" evidence="3">
    <location>
        <begin position="347"/>
        <end position="367"/>
    </location>
</feature>
<feature type="binding site" description="axial binding residue" evidence="5">
    <location>
        <position position="81"/>
    </location>
    <ligand>
        <name>heme b</name>
        <dbReference type="ChEBI" id="CHEBI:60344"/>
        <label>b562</label>
    </ligand>
    <ligandPart>
        <name>Fe</name>
        <dbReference type="ChEBI" id="CHEBI:18248"/>
    </ligandPart>
</feature>
<feature type="binding site" description="axial binding residue" evidence="5">
    <location>
        <position position="95"/>
    </location>
    <ligand>
        <name>heme b</name>
        <dbReference type="ChEBI" id="CHEBI:60344"/>
        <label>b566</label>
    </ligand>
    <ligandPart>
        <name>Fe</name>
        <dbReference type="ChEBI" id="CHEBI:18248"/>
    </ligandPart>
</feature>
<feature type="binding site" description="axial binding residue" evidence="5">
    <location>
        <position position="182"/>
    </location>
    <ligand>
        <name>heme b</name>
        <dbReference type="ChEBI" id="CHEBI:60344"/>
        <label>b562</label>
    </ligand>
    <ligandPart>
        <name>Fe</name>
        <dbReference type="ChEBI" id="CHEBI:18248"/>
    </ligandPart>
</feature>
<feature type="binding site" description="axial binding residue" evidence="5">
    <location>
        <position position="196"/>
    </location>
    <ligand>
        <name>heme b</name>
        <dbReference type="ChEBI" id="CHEBI:60344"/>
        <label>b566</label>
    </ligand>
    <ligandPart>
        <name>Fe</name>
        <dbReference type="ChEBI" id="CHEBI:18248"/>
    </ligandPart>
</feature>
<feature type="binding site" evidence="2">
    <location>
        <position position="201"/>
    </location>
    <ligand>
        <name>a ubiquinone</name>
        <dbReference type="ChEBI" id="CHEBI:16389"/>
    </ligand>
</feature>
<accession>Q35522</accession>
<gene>
    <name type="primary">cob</name>
    <name type="synonym">cytB</name>
</gene>
<sequence length="383" mass="44268">MRWNKKSLFAVLNNHLIDYPTPINLNYFFGFGSLAGIMLVVQILTGIFLAMHYTPHIDLAFNSVEHIMRDVNNGWLMRYTHANGASFFFIVVYVHIFRGLYYGSYITPREALWCSGVIIFILMMATAFMGYVLPWGQMSFWGATVITNLFSAIPLIGKDIVDWLWGGFAVDNPTLNRFFSLHFTFPFVIVGAVLIHLILLHEVGSNNPLGITLKTENIPFYPYFYTKDLFGLMVLFLVFFIFIFYYPNTLGHPDNYIEANPMKTPLHIVPEWYFLPFYAILRSIPNKIGGVIAMFGSLIVLLTIPFTNSSEIRSTAFRPIFKVCYWLLVVAFLLLGWVGQCPVEYPYTEIGIISMIYYFFFFIIIIPFLGKFETYLVRYNTNK</sequence>